<evidence type="ECO:0000255" key="1">
    <source>
        <dbReference type="HAMAP-Rule" id="MF_04069"/>
    </source>
</evidence>
<evidence type="ECO:0000256" key="2">
    <source>
        <dbReference type="SAM" id="MobiDB-lite"/>
    </source>
</evidence>
<keyword id="KW-0025">Alternative splicing</keyword>
<keyword id="KW-1015">Disulfide bond</keyword>
<keyword id="KW-0325">Glycoprotein</keyword>
<keyword id="KW-1032">Host cell membrane</keyword>
<keyword id="KW-1043">Host membrane</keyword>
<keyword id="KW-0945">Host-virus interaction</keyword>
<keyword id="KW-0375">Hydrogen ion transport</keyword>
<keyword id="KW-1083">Inhibition of host autophagy by virus</keyword>
<keyword id="KW-0407">Ion channel</keyword>
<keyword id="KW-0406">Ion transport</keyword>
<keyword id="KW-0449">Lipoprotein</keyword>
<keyword id="KW-0472">Membrane</keyword>
<keyword id="KW-0564">Palmitate</keyword>
<keyword id="KW-0597">Phosphoprotein</keyword>
<keyword id="KW-0735">Signal-anchor</keyword>
<keyword id="KW-0812">Transmembrane</keyword>
<keyword id="KW-1133">Transmembrane helix</keyword>
<keyword id="KW-0813">Transport</keyword>
<keyword id="KW-1182">Viral ion channel</keyword>
<keyword id="KW-0946">Virion</keyword>
<dbReference type="EMBL" id="X08091">
    <property type="protein sequence ID" value="CAA30889.1"/>
    <property type="molecule type" value="Genomic_RNA"/>
</dbReference>
<dbReference type="SMR" id="P10921"/>
<dbReference type="GlyCosmos" id="P10921">
    <property type="glycosylation" value="1 site, No reported glycans"/>
</dbReference>
<dbReference type="GO" id="GO:0020002">
    <property type="term" value="C:host cell plasma membrane"/>
    <property type="evidence" value="ECO:0007669"/>
    <property type="project" value="UniProtKB-SubCell"/>
</dbReference>
<dbReference type="GO" id="GO:0016020">
    <property type="term" value="C:membrane"/>
    <property type="evidence" value="ECO:0007669"/>
    <property type="project" value="UniProtKB-UniRule"/>
</dbReference>
<dbReference type="GO" id="GO:0055036">
    <property type="term" value="C:virion membrane"/>
    <property type="evidence" value="ECO:0007669"/>
    <property type="project" value="UniProtKB-SubCell"/>
</dbReference>
<dbReference type="GO" id="GO:0005216">
    <property type="term" value="F:monoatomic ion channel activity"/>
    <property type="evidence" value="ECO:0007669"/>
    <property type="project" value="UniProtKB-UniRule"/>
</dbReference>
<dbReference type="GO" id="GO:0015078">
    <property type="term" value="F:proton transmembrane transporter activity"/>
    <property type="evidence" value="ECO:0007669"/>
    <property type="project" value="UniProtKB-UniRule"/>
</dbReference>
<dbReference type="GO" id="GO:0051259">
    <property type="term" value="P:protein complex oligomerization"/>
    <property type="evidence" value="ECO:0007669"/>
    <property type="project" value="UniProtKB-UniRule"/>
</dbReference>
<dbReference type="GO" id="GO:0044694">
    <property type="term" value="P:symbiont genome entry into host cell via pore formation in plasma membrane"/>
    <property type="evidence" value="ECO:0007669"/>
    <property type="project" value="UniProtKB-UniRule"/>
</dbReference>
<dbReference type="GO" id="GO:0140321">
    <property type="term" value="P:symbiont-mediated suppression of host autophagy"/>
    <property type="evidence" value="ECO:0007669"/>
    <property type="project" value="UniProtKB-KW"/>
</dbReference>
<dbReference type="Gene3D" id="6.10.250.1640">
    <property type="match status" value="1"/>
</dbReference>
<dbReference type="HAMAP" id="MF_04069">
    <property type="entry name" value="INFV_M2"/>
    <property type="match status" value="1"/>
</dbReference>
<dbReference type="InterPro" id="IPR002089">
    <property type="entry name" value="Flu_M2"/>
</dbReference>
<dbReference type="Pfam" id="PF00599">
    <property type="entry name" value="Flu_M2"/>
    <property type="match status" value="1"/>
</dbReference>
<accession>P10921</accession>
<sequence>MSLLTEVETPIRNEWGCRCNDSSDPLVVAASIIGILHLILWILDRLFFKCIYRLFKHGLKRGPSTEGVPESMREEYRKEQQSAVDADDSHFVNIELE</sequence>
<protein>
    <recommendedName>
        <fullName evidence="1">Matrix protein 2</fullName>
    </recommendedName>
    <alternativeName>
        <fullName evidence="1">Proton channel protein M2</fullName>
    </alternativeName>
</protein>
<proteinExistence type="inferred from homology"/>
<organismHost>
    <name type="scientific">Aves</name>
    <dbReference type="NCBI Taxonomy" id="8782"/>
</organismHost>
<organismHost>
    <name type="scientific">Homo sapiens</name>
    <name type="common">Human</name>
    <dbReference type="NCBI Taxonomy" id="9606"/>
</organismHost>
<organismHost>
    <name type="scientific">Sus scrofa</name>
    <name type="common">Pig</name>
    <dbReference type="NCBI Taxonomy" id="9823"/>
</organismHost>
<organism>
    <name type="scientific">Influenza A virus (strain A/Fort Warren/1/1950 H1N1)</name>
    <dbReference type="NCBI Taxonomy" id="384525"/>
    <lineage>
        <taxon>Viruses</taxon>
        <taxon>Riboviria</taxon>
        <taxon>Orthornavirae</taxon>
        <taxon>Negarnaviricota</taxon>
        <taxon>Polyploviricotina</taxon>
        <taxon>Insthoviricetes</taxon>
        <taxon>Articulavirales</taxon>
        <taxon>Orthomyxoviridae</taxon>
        <taxon>Alphainfluenzavirus</taxon>
        <taxon>Alphainfluenzavirus influenzae</taxon>
        <taxon>Influenza A virus</taxon>
    </lineage>
</organism>
<gene>
    <name evidence="1" type="primary">M</name>
</gene>
<feature type="chain" id="PRO_0000078880" description="Matrix protein 2">
    <location>
        <begin position="1"/>
        <end position="97"/>
    </location>
</feature>
<feature type="topological domain" description="Virion surface" evidence="1">
    <location>
        <begin position="1"/>
        <end position="22"/>
    </location>
</feature>
<feature type="transmembrane region" description="Helical; Signal-anchor for type III membrane protein" evidence="1">
    <location>
        <begin position="23"/>
        <end position="43"/>
    </location>
</feature>
<feature type="topological domain" description="Intravirion" evidence="1">
    <location>
        <begin position="44"/>
        <end position="97"/>
    </location>
</feature>
<feature type="region of interest" description="Disordered" evidence="2">
    <location>
        <begin position="59"/>
        <end position="85"/>
    </location>
</feature>
<feature type="compositionally biased region" description="Basic and acidic residues" evidence="2">
    <location>
        <begin position="71"/>
        <end position="80"/>
    </location>
</feature>
<feature type="site" description="Essential for channel activity, possibly by being protonated during channel activation, and by forming the channel gate and the selective filter" evidence="1">
    <location>
        <position position="37"/>
    </location>
</feature>
<feature type="site" description="Seems to be involved in pH gating" evidence="1">
    <location>
        <position position="41"/>
    </location>
</feature>
<feature type="modified residue" description="Phosphoserine; by host" evidence="1">
    <location>
        <position position="64"/>
    </location>
</feature>
<feature type="modified residue" description="Phosphoserine; by host" evidence="1">
    <location>
        <position position="82"/>
    </location>
</feature>
<feature type="lipid moiety-binding region" description="S-palmitoyl cysteine; by host" evidence="1">
    <location>
        <position position="50"/>
    </location>
</feature>
<feature type="glycosylation site" description="N-linked (GlcNAc...) asparagine; by host" evidence="1">
    <location>
        <position position="20"/>
    </location>
</feature>
<feature type="disulfide bond" description="Interchain (with C-17)" evidence="1">
    <location>
        <position position="17"/>
    </location>
</feature>
<feature type="disulfide bond" description="Interchain (with C-19)" evidence="1">
    <location>
        <position position="19"/>
    </location>
</feature>
<comment type="function">
    <text evidence="1">Forms a proton-selective ion channel that is necessary for the efficient release of the viral genome during virus entry. After attaching to the cell surface, the virion enters the cell by endocytosis. Acidification of the endosome triggers M2 ion channel activity. The influx of protons into virion interior is believed to disrupt interactions between the viral ribonucleoprotein (RNP), matrix protein 1 (M1), and lipid bilayers, thereby freeing the viral genome from interaction with viral proteins and enabling RNA segments to migrate to the host cell nucleus, where influenza virus RNA transcription and replication occur. Also plays a role in viral proteins secretory pathway. Elevates the intravesicular pH of normally acidic compartments, such as trans-Golgi network, preventing newly formed hemagglutinin from premature switching to the fusion-active conformation.</text>
</comment>
<comment type="activity regulation">
    <text>The M2 protein from most influenza A strains is inhibited by amantadine and rimantadine, resulting in viral uncoating incapacity. Emergence of amantadine-resistant variants is usually rapid.</text>
</comment>
<comment type="subunit">
    <text evidence="1">Homotetramer; composed of two disulfide-linked dimers held together by non-covalent interactions. May interact with matrix protein 1.</text>
</comment>
<comment type="subcellular location">
    <subcellularLocation>
        <location evidence="1">Virion membrane</location>
    </subcellularLocation>
    <subcellularLocation>
        <location evidence="1">Host apical cell membrane</location>
        <topology evidence="1">Single-pass type III membrane protein</topology>
    </subcellularLocation>
    <text evidence="1">Abundantly expressed at the apical plasma membrane in infected polarized epithelial cells, in close proximity to budding and assembled virions. Minor component of virions (only 16-20 molecules/virion).</text>
</comment>
<comment type="alternative products">
    <event type="alternative splicing"/>
    <isoform>
        <id>P10921-1</id>
        <name>M2</name>
        <sequence type="displayed"/>
    </isoform>
    <isoform>
        <id>P69275-1</id>
        <name>M1</name>
        <sequence type="external"/>
    </isoform>
    <text>Only the first 9 residues are shared by the 2 isoforms.</text>
</comment>
<comment type="domain">
    <text evidence="1">Cytoplasmic tail plays an important role in virion assembly and morphogenesis.</text>
</comment>
<comment type="miscellaneous">
    <text evidence="1">When the channel is activated, one or more imidazole moieties of His-37 probably become bi-protonated.</text>
</comment>
<comment type="similarity">
    <text evidence="1">Belongs to the influenza viruses matrix protein M2 family.</text>
</comment>
<reference key="1">
    <citation type="journal article" date="1989" name="Nucleic Acids Res.">
        <title>Nucleotide sequences of influenza A virus RNA segment 7: a comparison of five isolates.</title>
        <authorList>
            <person name="Zebedee S.L."/>
            <person name="Lamb R.A."/>
        </authorList>
    </citation>
    <scope>NUCLEOTIDE SEQUENCE [GENOMIC RNA]</scope>
</reference>
<reference key="2">
    <citation type="journal article" date="2004" name="Virus Res.">
        <title>Assembly and budding of influenza virus.</title>
        <authorList>
            <person name="Nayak D.P."/>
            <person name="Hui E.K."/>
            <person name="Barman S."/>
        </authorList>
    </citation>
    <scope>REVIEW</scope>
</reference>
<reference key="3">
    <citation type="journal article" date="2003" name="FEBS Lett.">
        <title>Proton conduction through the M2 protein of the influenza A virus; a quantitative, mechanistic analysis of experimental data.</title>
        <authorList>
            <person name="Lear J.D."/>
        </authorList>
    </citation>
    <scope>REVIEW</scope>
</reference>
<reference key="4">
    <citation type="journal article" date="2003" name="FEBS Lett.">
        <title>Computational studies of proton transport through the M2 channel.</title>
        <authorList>
            <person name="Wu Y."/>
            <person name="Voth G.A."/>
        </authorList>
    </citation>
    <scope>REVIEW</scope>
</reference>
<name>M2_I50A0</name>